<protein>
    <recommendedName>
        <fullName evidence="1">Integration host factor subunit alpha</fullName>
        <shortName evidence="1">IHF-alpha</shortName>
    </recommendedName>
</protein>
<reference key="1">
    <citation type="journal article" date="2009" name="BMC Genomics">
        <title>Pseudogene accumulation in the evolutionary histories of Salmonella enterica serovars Paratyphi A and Typhi.</title>
        <authorList>
            <person name="Holt K.E."/>
            <person name="Thomson N.R."/>
            <person name="Wain J."/>
            <person name="Langridge G.C."/>
            <person name="Hasan R."/>
            <person name="Bhutta Z.A."/>
            <person name="Quail M.A."/>
            <person name="Norbertczak H."/>
            <person name="Walker D."/>
            <person name="Simmonds M."/>
            <person name="White B."/>
            <person name="Bason N."/>
            <person name="Mungall K."/>
            <person name="Dougan G."/>
            <person name="Parkhill J."/>
        </authorList>
    </citation>
    <scope>NUCLEOTIDE SEQUENCE [LARGE SCALE GENOMIC DNA]</scope>
    <source>
        <strain>AKU_12601</strain>
    </source>
</reference>
<keyword id="KW-0233">DNA recombination</keyword>
<keyword id="KW-0238">DNA-binding</keyword>
<keyword id="KW-0804">Transcription</keyword>
<keyword id="KW-0805">Transcription regulation</keyword>
<keyword id="KW-0810">Translation regulation</keyword>
<dbReference type="EMBL" id="FM200053">
    <property type="protein sequence ID" value="CAR59575.1"/>
    <property type="molecule type" value="Genomic_DNA"/>
</dbReference>
<dbReference type="RefSeq" id="WP_001229266.1">
    <property type="nucleotide sequence ID" value="NC_011147.1"/>
</dbReference>
<dbReference type="SMR" id="B5BA36"/>
<dbReference type="GeneID" id="92828695"/>
<dbReference type="KEGG" id="sek:SSPA1396"/>
<dbReference type="HOGENOM" id="CLU_105066_1_3_6"/>
<dbReference type="Proteomes" id="UP000001869">
    <property type="component" value="Chromosome"/>
</dbReference>
<dbReference type="GO" id="GO:0005829">
    <property type="term" value="C:cytosol"/>
    <property type="evidence" value="ECO:0007669"/>
    <property type="project" value="TreeGrafter"/>
</dbReference>
<dbReference type="GO" id="GO:0003677">
    <property type="term" value="F:DNA binding"/>
    <property type="evidence" value="ECO:0007669"/>
    <property type="project" value="UniProtKB-UniRule"/>
</dbReference>
<dbReference type="GO" id="GO:0030527">
    <property type="term" value="F:structural constituent of chromatin"/>
    <property type="evidence" value="ECO:0007669"/>
    <property type="project" value="InterPro"/>
</dbReference>
<dbReference type="GO" id="GO:0006310">
    <property type="term" value="P:DNA recombination"/>
    <property type="evidence" value="ECO:0007669"/>
    <property type="project" value="UniProtKB-UniRule"/>
</dbReference>
<dbReference type="GO" id="GO:0009893">
    <property type="term" value="P:positive regulation of metabolic process"/>
    <property type="evidence" value="ECO:0007669"/>
    <property type="project" value="UniProtKB-ARBA"/>
</dbReference>
<dbReference type="GO" id="GO:0006355">
    <property type="term" value="P:regulation of DNA-templated transcription"/>
    <property type="evidence" value="ECO:0007669"/>
    <property type="project" value="UniProtKB-UniRule"/>
</dbReference>
<dbReference type="GO" id="GO:0006417">
    <property type="term" value="P:regulation of translation"/>
    <property type="evidence" value="ECO:0007669"/>
    <property type="project" value="UniProtKB-UniRule"/>
</dbReference>
<dbReference type="CDD" id="cd13835">
    <property type="entry name" value="IHF_A"/>
    <property type="match status" value="1"/>
</dbReference>
<dbReference type="FunFam" id="4.10.520.10:FF:000002">
    <property type="entry name" value="Integration host factor subunit alpha"/>
    <property type="match status" value="1"/>
</dbReference>
<dbReference type="Gene3D" id="4.10.520.10">
    <property type="entry name" value="IHF-like DNA-binding proteins"/>
    <property type="match status" value="1"/>
</dbReference>
<dbReference type="HAMAP" id="MF_00380">
    <property type="entry name" value="IHF_alpha"/>
    <property type="match status" value="1"/>
</dbReference>
<dbReference type="InterPro" id="IPR000119">
    <property type="entry name" value="Hist_DNA-bd"/>
</dbReference>
<dbReference type="InterPro" id="IPR020816">
    <property type="entry name" value="Histone-like_DNA-bd_CS"/>
</dbReference>
<dbReference type="InterPro" id="IPR010992">
    <property type="entry name" value="IHF-like_DNA-bd_dom_sf"/>
</dbReference>
<dbReference type="InterPro" id="IPR005684">
    <property type="entry name" value="IHF_alpha"/>
</dbReference>
<dbReference type="NCBIfam" id="TIGR00987">
    <property type="entry name" value="himA"/>
    <property type="match status" value="1"/>
</dbReference>
<dbReference type="NCBIfam" id="NF001401">
    <property type="entry name" value="PRK00285.1"/>
    <property type="match status" value="1"/>
</dbReference>
<dbReference type="PANTHER" id="PTHR33175">
    <property type="entry name" value="DNA-BINDING PROTEIN HU"/>
    <property type="match status" value="1"/>
</dbReference>
<dbReference type="PANTHER" id="PTHR33175:SF2">
    <property type="entry name" value="INTEGRATION HOST FACTOR SUBUNIT ALPHA"/>
    <property type="match status" value="1"/>
</dbReference>
<dbReference type="Pfam" id="PF00216">
    <property type="entry name" value="Bac_DNA_binding"/>
    <property type="match status" value="1"/>
</dbReference>
<dbReference type="PRINTS" id="PR01727">
    <property type="entry name" value="DNABINDINGHU"/>
</dbReference>
<dbReference type="SMART" id="SM00411">
    <property type="entry name" value="BHL"/>
    <property type="match status" value="1"/>
</dbReference>
<dbReference type="SUPFAM" id="SSF47729">
    <property type="entry name" value="IHF-like DNA-binding proteins"/>
    <property type="match status" value="1"/>
</dbReference>
<dbReference type="PROSITE" id="PS00045">
    <property type="entry name" value="HISTONE_LIKE"/>
    <property type="match status" value="1"/>
</dbReference>
<organism>
    <name type="scientific">Salmonella paratyphi A (strain AKU_12601)</name>
    <dbReference type="NCBI Taxonomy" id="554290"/>
    <lineage>
        <taxon>Bacteria</taxon>
        <taxon>Pseudomonadati</taxon>
        <taxon>Pseudomonadota</taxon>
        <taxon>Gammaproteobacteria</taxon>
        <taxon>Enterobacterales</taxon>
        <taxon>Enterobacteriaceae</taxon>
        <taxon>Salmonella</taxon>
    </lineage>
</organism>
<feature type="chain" id="PRO_1000122165" description="Integration host factor subunit alpha">
    <location>
        <begin position="1"/>
        <end position="99"/>
    </location>
</feature>
<feature type="region of interest" description="Disordered" evidence="2">
    <location>
        <begin position="49"/>
        <end position="75"/>
    </location>
</feature>
<proteinExistence type="inferred from homology"/>
<name>IHFA_SALPK</name>
<sequence length="99" mass="11368">MALTKAEMSEYLFDKLGLSKRDAKELVELFFEEIRRALENGEQVKLSGFGNFDLRDKNQRPGRNPKTGEDIPITARRVVTFRPGQKLKSRVENASPKEE</sequence>
<comment type="function">
    <text evidence="1">This protein is one of the two subunits of integration host factor, a specific DNA-binding protein that functions in genetic recombination as well as in transcriptional and translational control.</text>
</comment>
<comment type="subunit">
    <text evidence="1">Heterodimer of an alpha and a beta chain.</text>
</comment>
<comment type="similarity">
    <text evidence="1">Belongs to the bacterial histone-like protein family.</text>
</comment>
<evidence type="ECO:0000255" key="1">
    <source>
        <dbReference type="HAMAP-Rule" id="MF_00380"/>
    </source>
</evidence>
<evidence type="ECO:0000256" key="2">
    <source>
        <dbReference type="SAM" id="MobiDB-lite"/>
    </source>
</evidence>
<gene>
    <name evidence="1" type="primary">ihfA</name>
    <name evidence="1" type="synonym">himA</name>
    <name type="ordered locus">SSPA1396</name>
</gene>
<accession>B5BA36</accession>